<sequence length="429" mass="46561">MTILAIVIFLLTLIFVIWQPKGLDIGITALIGAVVAIITGVVSFSDVLEVTGIVWNATLTFVAVILISLILDEIGFFEWSAIHMVKASNGNGLKMFVFIMLLGAIVAAFFANDGAALILTPIVLAMVRNLGFNKKVIFPFIIASGFIADTTSLPLIVSNLVNIVSADYFDIGFIEYFSRMIIPNIFSLIASILVLWLYFRKSIPKTFNTENLSDPKNVIKDPKLFKLSWIVLAILLVGYLVSEFIQIPVSIIAGIIALIFVILARKSKAVHTKQVIKGAPWNIVVFSIGMYLVVFGLKNVGITTILGDILTNISSYGLFSSIMGMGFIAAFLSSIMNNMPTVLIDAIAIGQSSATGILKEGMVYANVIGSDLGPKITPIGSLATLLWLHVLTQKGVKISWGTYFKTGIIITIPVLFVTLLGLYLTLIIF</sequence>
<accession>Q01255</accession>
<evidence type="ECO:0000255" key="1"/>
<evidence type="ECO:0000305" key="2"/>
<name>ARSB_STAXY</name>
<gene>
    <name type="primary">arsB</name>
</gene>
<proteinExistence type="inferred from homology"/>
<reference key="1">
    <citation type="journal article" date="1992" name="J. Bacteriol.">
        <title>Expression and regulation of the antimonite, arsenite, and arsenate resistance operon of Staphylococcus xylosus plasmid pSX267.</title>
        <authorList>
            <person name="Rosenstein R."/>
            <person name="Peschel A."/>
            <person name="Wieland B."/>
            <person name="Goetz F."/>
        </authorList>
    </citation>
    <scope>NUCLEOTIDE SEQUENCE [GENOMIC DNA]</scope>
    <source>
        <strain>DSM 20267 / Isolate C2A</strain>
    </source>
</reference>
<geneLocation type="plasmid">
    <name>pSX267</name>
</geneLocation>
<comment type="function">
    <text>Involved in arsenical resistance. Thought to form the channel of an arsenite pump.</text>
</comment>
<comment type="subcellular location">
    <subcellularLocation>
        <location evidence="2">Cell membrane</location>
        <topology evidence="2">Multi-pass membrane protein</topology>
    </subcellularLocation>
</comment>
<comment type="similarity">
    <text evidence="2">Belongs to the ArsB family.</text>
</comment>
<protein>
    <recommendedName>
        <fullName>Arsenical pump membrane protein</fullName>
    </recommendedName>
    <alternativeName>
        <fullName>Arsenic efflux pump protein</fullName>
    </alternativeName>
</protein>
<feature type="chain" id="PRO_0000201479" description="Arsenical pump membrane protein">
    <location>
        <begin position="1"/>
        <end position="429"/>
    </location>
</feature>
<feature type="transmembrane region" description="Helical" evidence="1">
    <location>
        <begin position="3"/>
        <end position="23"/>
    </location>
</feature>
<feature type="transmembrane region" description="Helical" evidence="1">
    <location>
        <begin position="25"/>
        <end position="45"/>
    </location>
</feature>
<feature type="transmembrane region" description="Helical" evidence="1">
    <location>
        <begin position="50"/>
        <end position="70"/>
    </location>
</feature>
<feature type="transmembrane region" description="Helical" evidence="1">
    <location>
        <begin position="98"/>
        <end position="118"/>
    </location>
</feature>
<feature type="transmembrane region" description="Helical" evidence="1">
    <location>
        <begin position="137"/>
        <end position="157"/>
    </location>
</feature>
<feature type="transmembrane region" description="Helical" evidence="1">
    <location>
        <begin position="180"/>
        <end position="200"/>
    </location>
</feature>
<feature type="transmembrane region" description="Helical" evidence="1">
    <location>
        <begin position="222"/>
        <end position="242"/>
    </location>
</feature>
<feature type="transmembrane region" description="Helical" evidence="1">
    <location>
        <begin position="244"/>
        <end position="264"/>
    </location>
</feature>
<feature type="transmembrane region" description="Helical" evidence="1">
    <location>
        <begin position="275"/>
        <end position="295"/>
    </location>
</feature>
<feature type="transmembrane region" description="Helical" evidence="1">
    <location>
        <begin position="316"/>
        <end position="336"/>
    </location>
</feature>
<feature type="transmembrane region" description="Helical" evidence="1">
    <location>
        <begin position="372"/>
        <end position="392"/>
    </location>
</feature>
<feature type="transmembrane region" description="Helical" evidence="1">
    <location>
        <begin position="408"/>
        <end position="428"/>
    </location>
</feature>
<organism>
    <name type="scientific">Staphylococcus xylosus</name>
    <dbReference type="NCBI Taxonomy" id="1288"/>
    <lineage>
        <taxon>Bacteria</taxon>
        <taxon>Bacillati</taxon>
        <taxon>Bacillota</taxon>
        <taxon>Bacilli</taxon>
        <taxon>Bacillales</taxon>
        <taxon>Staphylococcaceae</taxon>
        <taxon>Staphylococcus</taxon>
    </lineage>
</organism>
<keyword id="KW-0059">Arsenical resistance</keyword>
<keyword id="KW-1003">Cell membrane</keyword>
<keyword id="KW-0472">Membrane</keyword>
<keyword id="KW-0614">Plasmid</keyword>
<keyword id="KW-0812">Transmembrane</keyword>
<keyword id="KW-1133">Transmembrane helix</keyword>
<keyword id="KW-0813">Transport</keyword>
<dbReference type="EMBL" id="M80565">
    <property type="protein sequence ID" value="AAA27588.1"/>
    <property type="molecule type" value="Genomic_DNA"/>
</dbReference>
<dbReference type="PIR" id="B41902">
    <property type="entry name" value="B41902"/>
</dbReference>
<dbReference type="RefSeq" id="WP_099265891.1">
    <property type="nucleotide sequence ID" value="NZ_BKAZ01000044.1"/>
</dbReference>
<dbReference type="SMR" id="Q01255"/>
<dbReference type="STRING" id="1288.AWC37_05025"/>
<dbReference type="eggNOG" id="COG1055">
    <property type="taxonomic scope" value="Bacteria"/>
</dbReference>
<dbReference type="OrthoDB" id="9774335at2"/>
<dbReference type="GO" id="GO:0005886">
    <property type="term" value="C:plasma membrane"/>
    <property type="evidence" value="ECO:0007669"/>
    <property type="project" value="UniProtKB-SubCell"/>
</dbReference>
<dbReference type="GO" id="GO:0015105">
    <property type="term" value="F:arsenite transmembrane transporter activity"/>
    <property type="evidence" value="ECO:0007669"/>
    <property type="project" value="InterPro"/>
</dbReference>
<dbReference type="GO" id="GO:0046685">
    <property type="term" value="P:response to arsenic-containing substance"/>
    <property type="evidence" value="ECO:0007669"/>
    <property type="project" value="UniProtKB-KW"/>
</dbReference>
<dbReference type="CDD" id="cd01118">
    <property type="entry name" value="ArsB_permease"/>
    <property type="match status" value="1"/>
</dbReference>
<dbReference type="InterPro" id="IPR000802">
    <property type="entry name" value="Arsenical_pump_ArsB"/>
</dbReference>
<dbReference type="NCBIfam" id="TIGR00935">
    <property type="entry name" value="2a45"/>
    <property type="match status" value="1"/>
</dbReference>
<dbReference type="NCBIfam" id="NF033877">
    <property type="entry name" value="arsB_Sta_pI258"/>
    <property type="match status" value="1"/>
</dbReference>
<dbReference type="NCBIfam" id="NF011980">
    <property type="entry name" value="PRK15445.1"/>
    <property type="match status" value="1"/>
</dbReference>
<dbReference type="PANTHER" id="PTHR43302">
    <property type="entry name" value="TRANSPORTER ARSB-RELATED"/>
    <property type="match status" value="1"/>
</dbReference>
<dbReference type="PANTHER" id="PTHR43302:SF5">
    <property type="entry name" value="TRANSPORTER ARSB-RELATED"/>
    <property type="match status" value="1"/>
</dbReference>
<dbReference type="Pfam" id="PF02040">
    <property type="entry name" value="ArsB"/>
    <property type="match status" value="1"/>
</dbReference>
<dbReference type="PRINTS" id="PR00758">
    <property type="entry name" value="ARSENICPUMP"/>
</dbReference>